<keyword id="KW-0238">DNA-binding</keyword>
<keyword id="KW-0539">Nucleus</keyword>
<keyword id="KW-1185">Reference proteome</keyword>
<keyword id="KW-0804">Transcription</keyword>
<keyword id="KW-0805">Transcription regulation</keyword>
<name>Y5814_ORYSJ</name>
<reference key="1">
    <citation type="journal article" date="2005" name="Mol. Genet. Genomics">
        <title>A fine physical map of the rice chromosome 5.</title>
        <authorList>
            <person name="Cheng C.-H."/>
            <person name="Chung M.C."/>
            <person name="Liu S.-M."/>
            <person name="Chen S.-K."/>
            <person name="Kao F.Y."/>
            <person name="Lin S.-J."/>
            <person name="Hsiao S.-H."/>
            <person name="Tseng I.C."/>
            <person name="Hsing Y.-I.C."/>
            <person name="Wu H.-P."/>
            <person name="Chen C.-S."/>
            <person name="Shaw J.-F."/>
            <person name="Wu J."/>
            <person name="Matsumoto T."/>
            <person name="Sasaki T."/>
            <person name="Chen H.-C."/>
            <person name="Chow T.-Y."/>
        </authorList>
    </citation>
    <scope>NUCLEOTIDE SEQUENCE [LARGE SCALE GENOMIC DNA]</scope>
    <source>
        <strain>cv. Nipponbare</strain>
    </source>
</reference>
<reference key="2">
    <citation type="journal article" date="2005" name="Nature">
        <title>The map-based sequence of the rice genome.</title>
        <authorList>
            <consortium name="International rice genome sequencing project (IRGSP)"/>
        </authorList>
    </citation>
    <scope>NUCLEOTIDE SEQUENCE [LARGE SCALE GENOMIC DNA]</scope>
    <source>
        <strain>cv. Nipponbare</strain>
    </source>
</reference>
<reference key="3">
    <citation type="journal article" date="2008" name="Nucleic Acids Res.">
        <title>The rice annotation project database (RAP-DB): 2008 update.</title>
        <authorList>
            <consortium name="The rice annotation project (RAP)"/>
        </authorList>
    </citation>
    <scope>GENOME REANNOTATION</scope>
    <source>
        <strain>cv. Nipponbare</strain>
    </source>
</reference>
<reference key="4">
    <citation type="journal article" date="2013" name="Rice">
        <title>Improvement of the Oryza sativa Nipponbare reference genome using next generation sequence and optical map data.</title>
        <authorList>
            <person name="Kawahara Y."/>
            <person name="de la Bastide M."/>
            <person name="Hamilton J.P."/>
            <person name="Kanamori H."/>
            <person name="McCombie W.R."/>
            <person name="Ouyang S."/>
            <person name="Schwartz D.C."/>
            <person name="Tanaka T."/>
            <person name="Wu J."/>
            <person name="Zhou S."/>
            <person name="Childs K.L."/>
            <person name="Davidson R.M."/>
            <person name="Lin H."/>
            <person name="Quesada-Ocampo L."/>
            <person name="Vaillancourt B."/>
            <person name="Sakai H."/>
            <person name="Lee S.S."/>
            <person name="Kim J."/>
            <person name="Numa H."/>
            <person name="Itoh T."/>
            <person name="Buell C.R."/>
            <person name="Matsumoto T."/>
        </authorList>
    </citation>
    <scope>GENOME REANNOTATION</scope>
    <source>
        <strain>cv. Nipponbare</strain>
    </source>
</reference>
<reference key="5">
    <citation type="journal article" date="2003" name="Science">
        <title>Collection, mapping, and annotation of over 28,000 cDNA clones from japonica rice.</title>
        <authorList>
            <consortium name="The rice full-length cDNA consortium"/>
        </authorList>
    </citation>
    <scope>NUCLEOTIDE SEQUENCE [LARGE SCALE MRNA]</scope>
    <source>
        <strain>cv. Nipponbare</strain>
    </source>
</reference>
<gene>
    <name type="ordered locus">Os05g0481400</name>
    <name type="ordered locus">LOC_Os05g40280</name>
    <name type="ORF">OSJNBa0095J22.6</name>
</gene>
<dbReference type="EMBL" id="AC137619">
    <property type="protein sequence ID" value="AAW56868.1"/>
    <property type="molecule type" value="Genomic_DNA"/>
</dbReference>
<dbReference type="EMBL" id="AP008211">
    <property type="protein sequence ID" value="BAF17774.1"/>
    <property type="molecule type" value="Genomic_DNA"/>
</dbReference>
<dbReference type="EMBL" id="AP014961">
    <property type="protein sequence ID" value="BAS94585.1"/>
    <property type="molecule type" value="Genomic_DNA"/>
</dbReference>
<dbReference type="EMBL" id="AK068705">
    <property type="status" value="NOT_ANNOTATED_CDS"/>
    <property type="molecule type" value="mRNA"/>
</dbReference>
<dbReference type="RefSeq" id="XP_015639491.1">
    <property type="nucleotide sequence ID" value="XM_015784005.1"/>
</dbReference>
<dbReference type="SMR" id="Q5KQI4"/>
<dbReference type="FunCoup" id="Q5KQI4">
    <property type="interactions" value="48"/>
</dbReference>
<dbReference type="STRING" id="39947.Q5KQI4"/>
<dbReference type="PaxDb" id="39947-Q5KQI4"/>
<dbReference type="EnsemblPlants" id="Os05t0481400-01">
    <property type="protein sequence ID" value="Os05t0481400-01"/>
    <property type="gene ID" value="Os05g0481400"/>
</dbReference>
<dbReference type="Gramene" id="Os05t0481400-01">
    <property type="protein sequence ID" value="Os05t0481400-01"/>
    <property type="gene ID" value="Os05g0481400"/>
</dbReference>
<dbReference type="KEGG" id="dosa:Os05g0481400"/>
<dbReference type="eggNOG" id="KOG1216">
    <property type="taxonomic scope" value="Eukaryota"/>
</dbReference>
<dbReference type="HOGENOM" id="CLU_058918_0_0_1"/>
<dbReference type="InParanoid" id="Q5KQI4"/>
<dbReference type="OMA" id="KMASCQA"/>
<dbReference type="OrthoDB" id="1909330at2759"/>
<dbReference type="Proteomes" id="UP000000763">
    <property type="component" value="Chromosome 5"/>
</dbReference>
<dbReference type="Proteomes" id="UP000059680">
    <property type="component" value="Chromosome 5"/>
</dbReference>
<dbReference type="GO" id="GO:0005634">
    <property type="term" value="C:nucleus"/>
    <property type="evidence" value="ECO:0007669"/>
    <property type="project" value="UniProtKB-SubCell"/>
</dbReference>
<dbReference type="GO" id="GO:0003677">
    <property type="term" value="F:DNA binding"/>
    <property type="evidence" value="ECO:0007669"/>
    <property type="project" value="UniProtKB-KW"/>
</dbReference>
<dbReference type="CDD" id="cd10017">
    <property type="entry name" value="B3_DNA"/>
    <property type="match status" value="1"/>
</dbReference>
<dbReference type="Gene3D" id="2.40.330.10">
    <property type="entry name" value="DNA-binding pseudobarrel domain"/>
    <property type="match status" value="1"/>
</dbReference>
<dbReference type="InterPro" id="IPR003340">
    <property type="entry name" value="B3_DNA-bd"/>
</dbReference>
<dbReference type="InterPro" id="IPR015300">
    <property type="entry name" value="DNA-bd_pseudobarrel_sf"/>
</dbReference>
<dbReference type="InterPro" id="IPR044837">
    <property type="entry name" value="REM16-like"/>
</dbReference>
<dbReference type="PANTHER" id="PTHR31391:SF3">
    <property type="entry name" value="B3 DOMAIN-CONTAINING PROTEIN OS05G0481400"/>
    <property type="match status" value="1"/>
</dbReference>
<dbReference type="PANTHER" id="PTHR31391">
    <property type="entry name" value="B3 DOMAIN-CONTAINING PROTEIN OS11G0197600-RELATED"/>
    <property type="match status" value="1"/>
</dbReference>
<dbReference type="Pfam" id="PF02362">
    <property type="entry name" value="B3"/>
    <property type="match status" value="1"/>
</dbReference>
<dbReference type="SMART" id="SM01019">
    <property type="entry name" value="B3"/>
    <property type="match status" value="1"/>
</dbReference>
<dbReference type="SUPFAM" id="SSF101936">
    <property type="entry name" value="DNA-binding pseudobarrel domain"/>
    <property type="match status" value="1"/>
</dbReference>
<dbReference type="PROSITE" id="PS50863">
    <property type="entry name" value="B3"/>
    <property type="match status" value="1"/>
</dbReference>
<feature type="chain" id="PRO_0000376969" description="B3 domain-containing protein Os05g0481400">
    <location>
        <begin position="1"/>
        <end position="279"/>
    </location>
</feature>
<feature type="DNA-binding region" description="TF-B3" evidence="1">
    <location>
        <begin position="139"/>
        <end position="230"/>
    </location>
</feature>
<feature type="region of interest" description="Disordered" evidence="2">
    <location>
        <begin position="45"/>
        <end position="68"/>
    </location>
</feature>
<feature type="region of interest" description="Disordered" evidence="2">
    <location>
        <begin position="233"/>
        <end position="279"/>
    </location>
</feature>
<feature type="compositionally biased region" description="Acidic residues" evidence="2">
    <location>
        <begin position="233"/>
        <end position="244"/>
    </location>
</feature>
<feature type="compositionally biased region" description="Acidic residues" evidence="2">
    <location>
        <begin position="252"/>
        <end position="262"/>
    </location>
</feature>
<feature type="compositionally biased region" description="Basic residues" evidence="2">
    <location>
        <begin position="269"/>
        <end position="279"/>
    </location>
</feature>
<feature type="sequence conflict" description="In Ref. 5; AK068705." evidence="3" ref="5">
    <original>P</original>
    <variation>R</variation>
    <location>
        <position position="157"/>
    </location>
</feature>
<protein>
    <recommendedName>
        <fullName>B3 domain-containing protein Os05g0481400</fullName>
    </recommendedName>
</protein>
<accession>Q5KQI4</accession>
<accession>A0A0N7KKZ4</accession>
<sequence>MAAEAGSAAAGAAYEEERRKRVLENLKHLEDLGIKKMSKSLLEAARLQKSTRASPKPRKKFEVGATEVRRSSRARNSVSYKENFDELNSFLCRRRGSRIRSTEQGRDYTGRVASYEQQQRAFKKAERLQNSLDPENPSFVKTMVRSHVSSCFWLGLPTRFCKLHLPPKEYKMVLEDEEGGEFDSVYIGNRTGLSGGWRGFAMHHNLEDGDSLVFELAEPDRFKIYIIKAVDEDANESEPADEEAIGDKDTSTEDAAEQDDSPNAEPLKGTKRRKLRGRR</sequence>
<organism>
    <name type="scientific">Oryza sativa subsp. japonica</name>
    <name type="common">Rice</name>
    <dbReference type="NCBI Taxonomy" id="39947"/>
    <lineage>
        <taxon>Eukaryota</taxon>
        <taxon>Viridiplantae</taxon>
        <taxon>Streptophyta</taxon>
        <taxon>Embryophyta</taxon>
        <taxon>Tracheophyta</taxon>
        <taxon>Spermatophyta</taxon>
        <taxon>Magnoliopsida</taxon>
        <taxon>Liliopsida</taxon>
        <taxon>Poales</taxon>
        <taxon>Poaceae</taxon>
        <taxon>BOP clade</taxon>
        <taxon>Oryzoideae</taxon>
        <taxon>Oryzeae</taxon>
        <taxon>Oryzinae</taxon>
        <taxon>Oryza</taxon>
        <taxon>Oryza sativa</taxon>
    </lineage>
</organism>
<evidence type="ECO:0000255" key="1">
    <source>
        <dbReference type="PROSITE-ProRule" id="PRU00326"/>
    </source>
</evidence>
<evidence type="ECO:0000256" key="2">
    <source>
        <dbReference type="SAM" id="MobiDB-lite"/>
    </source>
</evidence>
<evidence type="ECO:0000305" key="3"/>
<comment type="subcellular location">
    <subcellularLocation>
        <location evidence="1">Nucleus</location>
    </subcellularLocation>
</comment>
<proteinExistence type="evidence at transcript level"/>